<evidence type="ECO:0000250" key="1"/>
<evidence type="ECO:0000250" key="2">
    <source>
        <dbReference type="UniProtKB" id="P07750"/>
    </source>
</evidence>
<evidence type="ECO:0000255" key="3"/>
<evidence type="ECO:0000305" key="4"/>
<accession>Q58M18</accession>
<sequence>MGLTYQLIPVLVCLLVCTSHFAHGHKCDITLAEIIKTLNILTTRKNSCMELPVADVFAAPKNTTEKETFCRAGIELRRIYRSHTCLNKFLGGLDRNLNSLASKTCSVNEAKTSTSTLKDLLEGLKTIMKEKYSKC</sequence>
<comment type="function">
    <text evidence="2">Participates in at least several B-cell activation processes as well as of other cell types. It is a costimulator of DNA-synthesis. It induces the expression of class II MHC molecules on resting B-cells. It enhances both secretion and cell surface expression of IgE and IgG1. It also regulates the expression of the low affinity Fc receptor for IgE (CD23) on both lymphocytes and monocytes. Positively regulates IL31RA expression in macrophages. Stimulates autophagy in dendritic cells by interfering with mTORC1 signaling and through the induction of RUFY4.</text>
</comment>
<comment type="subcellular location">
    <subcellularLocation>
        <location>Secreted</location>
    </subcellularLocation>
</comment>
<comment type="similarity">
    <text evidence="4">Belongs to the IL-4/IL-13 family.</text>
</comment>
<dbReference type="EMBL" id="AY939910">
    <property type="protein sequence ID" value="AAX35766.1"/>
    <property type="molecule type" value="mRNA"/>
</dbReference>
<dbReference type="SMR" id="Q58M18"/>
<dbReference type="GlyCosmos" id="Q58M18">
    <property type="glycosylation" value="1 site, No reported glycans"/>
</dbReference>
<dbReference type="GO" id="GO:0005615">
    <property type="term" value="C:extracellular space"/>
    <property type="evidence" value="ECO:0007669"/>
    <property type="project" value="UniProtKB-KW"/>
</dbReference>
<dbReference type="GO" id="GO:0005125">
    <property type="term" value="F:cytokine activity"/>
    <property type="evidence" value="ECO:0007669"/>
    <property type="project" value="UniProtKB-KW"/>
</dbReference>
<dbReference type="GO" id="GO:0008083">
    <property type="term" value="F:growth factor activity"/>
    <property type="evidence" value="ECO:0007669"/>
    <property type="project" value="UniProtKB-KW"/>
</dbReference>
<dbReference type="GO" id="GO:0005136">
    <property type="term" value="F:interleukin-4 receptor binding"/>
    <property type="evidence" value="ECO:0007669"/>
    <property type="project" value="InterPro"/>
</dbReference>
<dbReference type="GO" id="GO:0042113">
    <property type="term" value="P:B cell activation"/>
    <property type="evidence" value="ECO:0007669"/>
    <property type="project" value="UniProtKB-KW"/>
</dbReference>
<dbReference type="GO" id="GO:0006955">
    <property type="term" value="P:immune response"/>
    <property type="evidence" value="ECO:0007669"/>
    <property type="project" value="InterPro"/>
</dbReference>
<dbReference type="GO" id="GO:0035771">
    <property type="term" value="P:interleukin-4-mediated signaling pathway"/>
    <property type="evidence" value="ECO:0007669"/>
    <property type="project" value="TreeGrafter"/>
</dbReference>
<dbReference type="GO" id="GO:0050728">
    <property type="term" value="P:negative regulation of inflammatory response"/>
    <property type="evidence" value="ECO:0007669"/>
    <property type="project" value="TreeGrafter"/>
</dbReference>
<dbReference type="GO" id="GO:0045893">
    <property type="term" value="P:positive regulation of DNA-templated transcription"/>
    <property type="evidence" value="ECO:0007669"/>
    <property type="project" value="TreeGrafter"/>
</dbReference>
<dbReference type="GO" id="GO:0016239">
    <property type="term" value="P:positive regulation of macroautophagy"/>
    <property type="evidence" value="ECO:0000250"/>
    <property type="project" value="UniProtKB"/>
</dbReference>
<dbReference type="GO" id="GO:0050776">
    <property type="term" value="P:regulation of immune response"/>
    <property type="evidence" value="ECO:0007669"/>
    <property type="project" value="TreeGrafter"/>
</dbReference>
<dbReference type="FunFam" id="1.20.1250.10:FF:000014">
    <property type="entry name" value="Interleukin-4"/>
    <property type="match status" value="1"/>
</dbReference>
<dbReference type="Gene3D" id="1.20.1250.10">
    <property type="match status" value="1"/>
</dbReference>
<dbReference type="InterPro" id="IPR009079">
    <property type="entry name" value="4_helix_cytokine-like_core"/>
</dbReference>
<dbReference type="InterPro" id="IPR002354">
    <property type="entry name" value="IL-4"/>
</dbReference>
<dbReference type="InterPro" id="IPR001325">
    <property type="entry name" value="IL-4/IL-13"/>
</dbReference>
<dbReference type="InterPro" id="IPR018096">
    <property type="entry name" value="IL-4/IL-13_CS"/>
</dbReference>
<dbReference type="PANTHER" id="PTHR47401">
    <property type="entry name" value="INTERLEUKIN-4"/>
    <property type="match status" value="1"/>
</dbReference>
<dbReference type="PANTHER" id="PTHR47401:SF1">
    <property type="entry name" value="INTERLEUKIN-4"/>
    <property type="match status" value="1"/>
</dbReference>
<dbReference type="Pfam" id="PF00727">
    <property type="entry name" value="IL4"/>
    <property type="match status" value="1"/>
</dbReference>
<dbReference type="PIRSF" id="PIRSF001941">
    <property type="entry name" value="Interleukin_4"/>
    <property type="match status" value="1"/>
</dbReference>
<dbReference type="PRINTS" id="PR00431">
    <property type="entry name" value="INTERLEUKIN4"/>
</dbReference>
<dbReference type="SMART" id="SM00190">
    <property type="entry name" value="IL4_13"/>
    <property type="match status" value="1"/>
</dbReference>
<dbReference type="SUPFAM" id="SSF47266">
    <property type="entry name" value="4-helical cytokines"/>
    <property type="match status" value="1"/>
</dbReference>
<dbReference type="PROSITE" id="PS00838">
    <property type="entry name" value="INTERLEUKIN_4_13"/>
    <property type="match status" value="1"/>
</dbReference>
<name>IL4_BOSTR</name>
<organism>
    <name type="scientific">Boselaphus tragocamelus</name>
    <name type="common">Nilgai</name>
    <dbReference type="NCBI Taxonomy" id="9917"/>
    <lineage>
        <taxon>Eukaryota</taxon>
        <taxon>Metazoa</taxon>
        <taxon>Chordata</taxon>
        <taxon>Craniata</taxon>
        <taxon>Vertebrata</taxon>
        <taxon>Euteleostomi</taxon>
        <taxon>Mammalia</taxon>
        <taxon>Eutheria</taxon>
        <taxon>Laurasiatheria</taxon>
        <taxon>Artiodactyla</taxon>
        <taxon>Ruminantia</taxon>
        <taxon>Pecora</taxon>
        <taxon>Bovidae</taxon>
        <taxon>Bovinae</taxon>
        <taxon>Boselaphus</taxon>
    </lineage>
</organism>
<keyword id="KW-0075">B-cell activation</keyword>
<keyword id="KW-0202">Cytokine</keyword>
<keyword id="KW-1015">Disulfide bond</keyword>
<keyword id="KW-0325">Glycoprotein</keyword>
<keyword id="KW-0339">Growth factor</keyword>
<keyword id="KW-0964">Secreted</keyword>
<keyword id="KW-0732">Signal</keyword>
<feature type="signal peptide" evidence="1">
    <location>
        <begin position="1"/>
        <end position="24"/>
    </location>
</feature>
<feature type="chain" id="PRO_0000253491" description="Interleukin-4">
    <location>
        <begin position="25"/>
        <end position="135"/>
    </location>
</feature>
<feature type="glycosylation site" description="N-linked (GlcNAc...) asparagine" evidence="3">
    <location>
        <position position="62"/>
    </location>
</feature>
<feature type="disulfide bond" evidence="1">
    <location>
        <begin position="27"/>
        <end position="135"/>
    </location>
</feature>
<feature type="disulfide bond" evidence="1">
    <location>
        <begin position="48"/>
        <end position="85"/>
    </location>
</feature>
<feature type="disulfide bond" evidence="1">
    <location>
        <begin position="70"/>
        <end position="105"/>
    </location>
</feature>
<proteinExistence type="evidence at transcript level"/>
<protein>
    <recommendedName>
        <fullName>Interleukin-4</fullName>
        <shortName>IL-4</shortName>
    </recommendedName>
    <alternativeName>
        <fullName>B-cell stimulatory factor 1</fullName>
        <shortName>BSF-1</shortName>
    </alternativeName>
    <alternativeName>
        <fullName>Lymphocyte stimulatory factor 1</fullName>
    </alternativeName>
</protein>
<reference key="1">
    <citation type="submission" date="2005-02" db="EMBL/GenBank/DDBJ databases">
        <title>Nucleotide and amino acid sequence comparison of Boselaphus tragocamelus IL-4 with other ruminants.</title>
        <authorList>
            <person name="Gupta P.K."/>
            <person name="Das D."/>
            <person name="Swarup D."/>
            <person name="Yadav M.P."/>
            <person name="Singh G.R."/>
            <person name="Arora B.M."/>
            <person name="Chandra P."/>
            <person name="Saini M."/>
        </authorList>
    </citation>
    <scope>NUCLEOTIDE SEQUENCE [MRNA]</scope>
</reference>
<gene>
    <name type="primary">IL4</name>
</gene>